<sequence>MTRNGIGIRTAQVRSERLTGQIHVYDGVGKGKSQAALGVVLRSIGLGINAPNNSNRVLLLRFLKGPERDYDEDGAIAALQRGFPHLIDQVRTGRAEFFGPEEITTFDRSEAGRGWDVAKGAIASGLYSVVVLDEINPVLDLGLLSVDEVVGTLKSKPQELEIIATGRGAPQKLLDIADLHSEMKPLHHPKATELLMTGIEIYTGAGKGKSTSALGKALQAIGRGINHPGSTRVLIMQWLKGGSGYTEDAAISALRQSYPEVVDHQRCGRDAIVWRNSRQELDYVEAERGWEIAKVAIASGLYKTIILDELNPTVDLELLPVEPIVQALLRKPRDTEIIITGRCQNQPAYFDLASIHSEVYCHKHYANQGVELKRGVDF</sequence>
<reference key="1">
    <citation type="journal article" date="2001" name="DNA Res.">
        <title>Complete genomic sequence of the filamentous nitrogen-fixing cyanobacterium Anabaena sp. strain PCC 7120.</title>
        <authorList>
            <person name="Kaneko T."/>
            <person name="Nakamura Y."/>
            <person name="Wolk C.P."/>
            <person name="Kuritz T."/>
            <person name="Sasamoto S."/>
            <person name="Watanabe A."/>
            <person name="Iriguchi M."/>
            <person name="Ishikawa A."/>
            <person name="Kawashima K."/>
            <person name="Kimura T."/>
            <person name="Kishida Y."/>
            <person name="Kohara M."/>
            <person name="Matsumoto M."/>
            <person name="Matsuno A."/>
            <person name="Muraki A."/>
            <person name="Nakazaki N."/>
            <person name="Shimpo S."/>
            <person name="Sugimoto M."/>
            <person name="Takazawa M."/>
            <person name="Yamada M."/>
            <person name="Yasuda M."/>
            <person name="Tabata S."/>
        </authorList>
    </citation>
    <scope>NUCLEOTIDE SEQUENCE [LARGE SCALE GENOMIC DNA]</scope>
    <source>
        <strain>PCC 7120 / SAG 25.82 / UTEX 2576</strain>
    </source>
</reference>
<reference key="2">
    <citation type="journal article" date="1995" name="J. Bacteriol.">
        <title>A short-filament mutant of Anabaena sp. strain PCC 7120 that fragments in nitrogen-deficient medium.</title>
        <authorList>
            <person name="Bauer C.C."/>
            <person name="Buikema W.J."/>
            <person name="Black K."/>
            <person name="Haselkorn R."/>
        </authorList>
    </citation>
    <scope>NUCLEOTIDE SEQUENCE [GENOMIC DNA] OF 1-122</scope>
</reference>
<name>Y2391_NOSS1</name>
<gene>
    <name type="ordered locus">all2391</name>
</gene>
<feature type="chain" id="PRO_0000208895" description="Uncharacterized protein all2391">
    <location>
        <begin position="1"/>
        <end position="378"/>
    </location>
</feature>
<feature type="sequence conflict" description="In Ref. 2; AAA18028/AAB33742." evidence="1" ref="2">
    <original>GF</original>
    <variation>DS</variation>
    <location>
        <begin position="82"/>
        <end position="83"/>
    </location>
</feature>
<feature type="sequence conflict" description="In Ref. 2; AAB33742." evidence="1" ref="2">
    <original>VAKGAI</original>
    <variation>ASKARS</variation>
    <location>
        <begin position="117"/>
        <end position="122"/>
    </location>
</feature>
<protein>
    <recommendedName>
        <fullName>Uncharacterized protein all2391</fullName>
    </recommendedName>
</protein>
<evidence type="ECO:0000305" key="1"/>
<organism>
    <name type="scientific">Nostoc sp. (strain PCC 7120 / SAG 25.82 / UTEX 2576)</name>
    <dbReference type="NCBI Taxonomy" id="103690"/>
    <lineage>
        <taxon>Bacteria</taxon>
        <taxon>Bacillati</taxon>
        <taxon>Cyanobacteriota</taxon>
        <taxon>Cyanophyceae</taxon>
        <taxon>Nostocales</taxon>
        <taxon>Nostocaceae</taxon>
        <taxon>Nostoc</taxon>
    </lineage>
</organism>
<dbReference type="EMBL" id="BA000019">
    <property type="protein sequence ID" value="BAB74090.1"/>
    <property type="molecule type" value="Genomic_DNA"/>
</dbReference>
<dbReference type="EMBL" id="U09240">
    <property type="protein sequence ID" value="AAA18028.1"/>
    <property type="molecule type" value="Unassigned_DNA"/>
</dbReference>
<dbReference type="EMBL" id="S76266">
    <property type="protein sequence ID" value="AAB33742.2"/>
    <property type="molecule type" value="Genomic_DNA"/>
</dbReference>
<dbReference type="PIR" id="AH2104">
    <property type="entry name" value="AH2104"/>
</dbReference>
<dbReference type="RefSeq" id="WP_010996547.1">
    <property type="nucleotide sequence ID" value="NZ_RSCN01000002.1"/>
</dbReference>
<dbReference type="SMR" id="P46080"/>
<dbReference type="STRING" id="103690.gene:10494421"/>
<dbReference type="KEGG" id="ana:all2391"/>
<dbReference type="eggNOG" id="COG2109">
    <property type="taxonomic scope" value="Bacteria"/>
</dbReference>
<dbReference type="OrthoDB" id="525127at2"/>
<dbReference type="Proteomes" id="UP000002483">
    <property type="component" value="Chromosome"/>
</dbReference>
<dbReference type="GO" id="GO:0005524">
    <property type="term" value="F:ATP binding"/>
    <property type="evidence" value="ECO:0007669"/>
    <property type="project" value="InterPro"/>
</dbReference>
<dbReference type="GO" id="GO:0008817">
    <property type="term" value="F:corrinoid adenosyltransferase activity"/>
    <property type="evidence" value="ECO:0007669"/>
    <property type="project" value="InterPro"/>
</dbReference>
<dbReference type="GO" id="GO:0009236">
    <property type="term" value="P:cobalamin biosynthetic process"/>
    <property type="evidence" value="ECO:0007669"/>
    <property type="project" value="InterPro"/>
</dbReference>
<dbReference type="CDD" id="cd00561">
    <property type="entry name" value="CobA_ACA"/>
    <property type="match status" value="1"/>
</dbReference>
<dbReference type="Gene3D" id="3.40.50.300">
    <property type="entry name" value="P-loop containing nucleotide triphosphate hydrolases"/>
    <property type="match status" value="1"/>
</dbReference>
<dbReference type="InterPro" id="IPR003724">
    <property type="entry name" value="CblAdoTrfase_CobA"/>
</dbReference>
<dbReference type="InterPro" id="IPR027417">
    <property type="entry name" value="P-loop_NTPase"/>
</dbReference>
<dbReference type="NCBIfam" id="NF005647">
    <property type="entry name" value="PRK07413.1"/>
    <property type="match status" value="1"/>
</dbReference>
<dbReference type="PANTHER" id="PTHR46638">
    <property type="entry name" value="CORRINOID ADENOSYLTRANSFERASE"/>
    <property type="match status" value="1"/>
</dbReference>
<dbReference type="PANTHER" id="PTHR46638:SF1">
    <property type="entry name" value="CORRINOID ADENOSYLTRANSFERASE"/>
    <property type="match status" value="1"/>
</dbReference>
<dbReference type="Pfam" id="PF02572">
    <property type="entry name" value="CobA_CobO_BtuR"/>
    <property type="match status" value="2"/>
</dbReference>
<dbReference type="SUPFAM" id="SSF52540">
    <property type="entry name" value="P-loop containing nucleoside triphosphate hydrolases"/>
    <property type="match status" value="2"/>
</dbReference>
<keyword id="KW-1185">Reference proteome</keyword>
<accession>P46080</accession>
<accession>Q53486</accession>
<proteinExistence type="predicted"/>